<evidence type="ECO:0000255" key="1">
    <source>
        <dbReference type="HAMAP-Rule" id="MF_00433"/>
    </source>
</evidence>
<proteinExistence type="inferred from homology"/>
<dbReference type="EMBL" id="AP007050">
    <property type="protein sequence ID" value="BAE02596.1"/>
    <property type="molecule type" value="Genomic_DNA"/>
</dbReference>
<dbReference type="EMBL" id="AP007051">
    <property type="protein sequence ID" value="BAE02597.1"/>
    <property type="molecule type" value="Genomic_DNA"/>
</dbReference>
<dbReference type="EMBL" id="AP006714">
    <property type="protein sequence ID" value="BAD27310.1"/>
    <property type="molecule type" value="Genomic_DNA"/>
</dbReference>
<dbReference type="RefSeq" id="YP_009389588.1">
    <property type="nucleotide sequence ID" value="NC_035224.1"/>
</dbReference>
<dbReference type="SMR" id="Q6ENU6"/>
<dbReference type="GeneID" id="33347813"/>
<dbReference type="GO" id="GO:0009535">
    <property type="term" value="C:chloroplast thylakoid membrane"/>
    <property type="evidence" value="ECO:0007669"/>
    <property type="project" value="UniProtKB-SubCell"/>
</dbReference>
<dbReference type="GO" id="GO:0009512">
    <property type="term" value="C:cytochrome b6f complex"/>
    <property type="evidence" value="ECO:0007669"/>
    <property type="project" value="InterPro"/>
</dbReference>
<dbReference type="GO" id="GO:0045158">
    <property type="term" value="F:electron transporter, transferring electrons within cytochrome b6/f complex of photosystem II activity"/>
    <property type="evidence" value="ECO:0007669"/>
    <property type="project" value="UniProtKB-UniRule"/>
</dbReference>
<dbReference type="GO" id="GO:0015979">
    <property type="term" value="P:photosynthesis"/>
    <property type="evidence" value="ECO:0007669"/>
    <property type="project" value="UniProtKB-KW"/>
</dbReference>
<dbReference type="HAMAP" id="MF_00433">
    <property type="entry name" value="Cytb6_f_PetL"/>
    <property type="match status" value="1"/>
</dbReference>
<dbReference type="InterPro" id="IPR007802">
    <property type="entry name" value="Cyt_b6/f_cplx_su6"/>
</dbReference>
<dbReference type="PANTHER" id="PTHR37266">
    <property type="entry name" value="CYTOCHROME B6-F COMPLEX SUBUNIT 6"/>
    <property type="match status" value="1"/>
</dbReference>
<dbReference type="PANTHER" id="PTHR37266:SF1">
    <property type="entry name" value="CYTOCHROME B6-F COMPLEX SUBUNIT 6"/>
    <property type="match status" value="1"/>
</dbReference>
<dbReference type="Pfam" id="PF05115">
    <property type="entry name" value="PetL"/>
    <property type="match status" value="1"/>
</dbReference>
<dbReference type="SUPFAM" id="SSF103436">
    <property type="entry name" value="PetL subunit of the cytochrome b6f complex"/>
    <property type="match status" value="1"/>
</dbReference>
<protein>
    <recommendedName>
        <fullName evidence="1">Cytochrome b6-f complex subunit 6</fullName>
    </recommendedName>
    <alternativeName>
        <fullName evidence="1">Cytochrome b6-f complex subunit PetL</fullName>
    </alternativeName>
    <alternativeName>
        <fullName evidence="1">Cytochrome b6-f complex subunit VI</fullName>
    </alternativeName>
</protein>
<keyword id="KW-0150">Chloroplast</keyword>
<keyword id="KW-0249">Electron transport</keyword>
<keyword id="KW-0472">Membrane</keyword>
<keyword id="KW-0602">Photosynthesis</keyword>
<keyword id="KW-0934">Plastid</keyword>
<keyword id="KW-0793">Thylakoid</keyword>
<keyword id="KW-0812">Transmembrane</keyword>
<keyword id="KW-1133">Transmembrane helix</keyword>
<keyword id="KW-0813">Transport</keyword>
<reference key="1">
    <citation type="journal article" date="2005" name="Theor. Appl. Genet.">
        <title>Very close relationship of the chloroplast genomes among Saccharum species.</title>
        <authorList>
            <person name="Takahashi S."/>
            <person name="Furukawa T."/>
            <person name="Asano T."/>
            <person name="Terajima Y."/>
            <person name="Shimada H."/>
            <person name="Sugimoto A."/>
            <person name="Kadowaki K."/>
        </authorList>
    </citation>
    <scope>NUCLEOTIDE SEQUENCE [GENOMIC DNA]</scope>
    <source>
        <strain>cv. Badila</strain>
        <strain>cv. Fiji40</strain>
    </source>
</reference>
<reference key="2">
    <citation type="journal article" date="2004" name="DNA Res.">
        <title>Complete nucleotide sequence of the sugarcane (Saccharum officinarum) chloroplast genome: a comparative analysis of four monocot chloroplast genomes.</title>
        <authorList>
            <person name="Asano T."/>
            <person name="Tsudzuki T."/>
            <person name="Takahashi S."/>
            <person name="Shimada H."/>
            <person name="Kadowaki K."/>
        </authorList>
    </citation>
    <scope>NUCLEOTIDE SEQUENCE [LARGE SCALE GENOMIC DNA]</scope>
</reference>
<name>PETL_SACOF</name>
<geneLocation type="chloroplast"/>
<organism>
    <name type="scientific">Saccharum officinarum</name>
    <name type="common">Sugarcane</name>
    <dbReference type="NCBI Taxonomy" id="4547"/>
    <lineage>
        <taxon>Eukaryota</taxon>
        <taxon>Viridiplantae</taxon>
        <taxon>Streptophyta</taxon>
        <taxon>Embryophyta</taxon>
        <taxon>Tracheophyta</taxon>
        <taxon>Spermatophyta</taxon>
        <taxon>Magnoliopsida</taxon>
        <taxon>Liliopsida</taxon>
        <taxon>Poales</taxon>
        <taxon>Poaceae</taxon>
        <taxon>PACMAD clade</taxon>
        <taxon>Panicoideae</taxon>
        <taxon>Andropogonodae</taxon>
        <taxon>Andropogoneae</taxon>
        <taxon>Saccharinae</taxon>
        <taxon>Saccharum</taxon>
        <taxon>Saccharum officinarum species complex</taxon>
    </lineage>
</organism>
<feature type="chain" id="PRO_0000220477" description="Cytochrome b6-f complex subunit 6">
    <location>
        <begin position="1"/>
        <end position="31"/>
    </location>
</feature>
<feature type="transmembrane region" description="Helical" evidence="1">
    <location>
        <begin position="4"/>
        <end position="24"/>
    </location>
</feature>
<comment type="function">
    <text evidence="1">Component of the cytochrome b6-f complex, which mediates electron transfer between photosystem II (PSII) and photosystem I (PSI), cyclic electron flow around PSI, and state transitions. PetL is important for photoautotrophic growth as well as for electron transfer efficiency and stability of the cytochrome b6-f complex.</text>
</comment>
<comment type="subunit">
    <text evidence="1">The 4 large subunits of the cytochrome b6-f complex are cytochrome b6, subunit IV (17 kDa polypeptide, PetD), cytochrome f and the Rieske protein, while the 4 small subunits are PetG, PetL, PetM and PetN. The complex functions as a dimer.</text>
</comment>
<comment type="subcellular location">
    <subcellularLocation>
        <location evidence="1">Plastid</location>
        <location evidence="1">Chloroplast thylakoid membrane</location>
        <topology evidence="1">Single-pass membrane protein</topology>
    </subcellularLocation>
</comment>
<comment type="similarity">
    <text evidence="1">Belongs to the PetL family.</text>
</comment>
<gene>
    <name evidence="1" type="primary">petL</name>
</gene>
<sequence>MLTITSYFGFLLAALTITPALFIGLNKIRLI</sequence>
<accession>Q6ENU6</accession>
<accession>Q4QYT5</accession>